<organism>
    <name type="scientific">Staphylococcus aureus (strain MRSA252)</name>
    <dbReference type="NCBI Taxonomy" id="282458"/>
    <lineage>
        <taxon>Bacteria</taxon>
        <taxon>Bacillati</taxon>
        <taxon>Bacillota</taxon>
        <taxon>Bacilli</taxon>
        <taxon>Bacillales</taxon>
        <taxon>Staphylococcaceae</taxon>
        <taxon>Staphylococcus</taxon>
    </lineage>
</organism>
<accession>Q6GIM1</accession>
<dbReference type="EMBL" id="BX571856">
    <property type="protein sequence ID" value="CAG39834.1"/>
    <property type="molecule type" value="Genomic_DNA"/>
</dbReference>
<dbReference type="RefSeq" id="WP_000816311.1">
    <property type="nucleotide sequence ID" value="NC_002952.2"/>
</dbReference>
<dbReference type="SMR" id="Q6GIM1"/>
<dbReference type="KEGG" id="sar:SAR0825"/>
<dbReference type="HOGENOM" id="CLU_047373_0_3_9"/>
<dbReference type="Proteomes" id="UP000000596">
    <property type="component" value="Chromosome"/>
</dbReference>
<dbReference type="Gene3D" id="3.40.50.720">
    <property type="entry name" value="NAD(P)-binding Rossmann-like Domain"/>
    <property type="match status" value="1"/>
</dbReference>
<dbReference type="InterPro" id="IPR013549">
    <property type="entry name" value="DUF1731"/>
</dbReference>
<dbReference type="InterPro" id="IPR001509">
    <property type="entry name" value="Epimerase_deHydtase"/>
</dbReference>
<dbReference type="InterPro" id="IPR036291">
    <property type="entry name" value="NAD(P)-bd_dom_sf"/>
</dbReference>
<dbReference type="InterPro" id="IPR010099">
    <property type="entry name" value="SDR39U1"/>
</dbReference>
<dbReference type="NCBIfam" id="TIGR01777">
    <property type="entry name" value="yfcH"/>
    <property type="match status" value="1"/>
</dbReference>
<dbReference type="PANTHER" id="PTHR11092:SF0">
    <property type="entry name" value="EPIMERASE FAMILY PROTEIN SDR39U1"/>
    <property type="match status" value="1"/>
</dbReference>
<dbReference type="PANTHER" id="PTHR11092">
    <property type="entry name" value="SUGAR NUCLEOTIDE EPIMERASE RELATED"/>
    <property type="match status" value="1"/>
</dbReference>
<dbReference type="Pfam" id="PF08338">
    <property type="entry name" value="DUF1731"/>
    <property type="match status" value="1"/>
</dbReference>
<dbReference type="Pfam" id="PF01370">
    <property type="entry name" value="Epimerase"/>
    <property type="match status" value="1"/>
</dbReference>
<dbReference type="SUPFAM" id="SSF51735">
    <property type="entry name" value="NAD(P)-binding Rossmann-fold domains"/>
    <property type="match status" value="1"/>
</dbReference>
<proteinExistence type="inferred from homology"/>
<name>Y825_STAAR</name>
<comment type="similarity">
    <text evidence="1">Belongs to the NAD(P)-dependent epimerase/dehydratase family. SDR39U1 subfamily.</text>
</comment>
<sequence length="300" mass="34241">MKQYLITGGTGMVGSQLVNEIKKSDSHITILTRHDQISNNKKISYVNWAKSGWEHKVPQNIDVVINLAGATLNKRWTPEYKQTLMLSRIQSTQALYELFKSRNKAPKVLFNASATGYYPPDLFMSYTEVYKTLPFDFLSDIVYQWERFAQQFEQLGTRVVIGRFGIILSNEGGALQTMKLPYEYYIGGKLGSGQQWYSWIHINDLIQAILFLINNESASGPFNLTAPIPERQNLFGYTLARAMHKPHETWVPSLAMRLILGQMSTVVLDTQKVLPNKIQALGFQFKYSNLKMALEDLISK</sequence>
<feature type="chain" id="PRO_0000274154" description="Epimerase family protein SAR0825">
    <location>
        <begin position="1"/>
        <end position="300"/>
    </location>
</feature>
<gene>
    <name type="ordered locus">SAR0825</name>
</gene>
<protein>
    <recommendedName>
        <fullName>Epimerase family protein SAR0825</fullName>
    </recommendedName>
</protein>
<reference key="1">
    <citation type="journal article" date="2004" name="Proc. Natl. Acad. Sci. U.S.A.">
        <title>Complete genomes of two clinical Staphylococcus aureus strains: evidence for the rapid evolution of virulence and drug resistance.</title>
        <authorList>
            <person name="Holden M.T.G."/>
            <person name="Feil E.J."/>
            <person name="Lindsay J.A."/>
            <person name="Peacock S.J."/>
            <person name="Day N.P.J."/>
            <person name="Enright M.C."/>
            <person name="Foster T.J."/>
            <person name="Moore C.E."/>
            <person name="Hurst L."/>
            <person name="Atkin R."/>
            <person name="Barron A."/>
            <person name="Bason N."/>
            <person name="Bentley S.D."/>
            <person name="Chillingworth C."/>
            <person name="Chillingworth T."/>
            <person name="Churcher C."/>
            <person name="Clark L."/>
            <person name="Corton C."/>
            <person name="Cronin A."/>
            <person name="Doggett J."/>
            <person name="Dowd L."/>
            <person name="Feltwell T."/>
            <person name="Hance Z."/>
            <person name="Harris B."/>
            <person name="Hauser H."/>
            <person name="Holroyd S."/>
            <person name="Jagels K."/>
            <person name="James K.D."/>
            <person name="Lennard N."/>
            <person name="Line A."/>
            <person name="Mayes R."/>
            <person name="Moule S."/>
            <person name="Mungall K."/>
            <person name="Ormond D."/>
            <person name="Quail M.A."/>
            <person name="Rabbinowitsch E."/>
            <person name="Rutherford K.M."/>
            <person name="Sanders M."/>
            <person name="Sharp S."/>
            <person name="Simmonds M."/>
            <person name="Stevens K."/>
            <person name="Whitehead S."/>
            <person name="Barrell B.G."/>
            <person name="Spratt B.G."/>
            <person name="Parkhill J."/>
        </authorList>
    </citation>
    <scope>NUCLEOTIDE SEQUENCE [LARGE SCALE GENOMIC DNA]</scope>
    <source>
        <strain>MRSA252</strain>
    </source>
</reference>
<evidence type="ECO:0000305" key="1"/>